<sequence>MAFTPFPPRQPAASARLPLTLISLEDWALATITGPDSEKYLQGQVTADVTELGENQHLLVAHCDAKGKMWSNLRLFRHGDGFAWIERRSVRDTQLAEMKKYAVFSKVTIAPNDDAVLLGVAGFQARAALANHFATLPDEQNPRVVDGATTLLWFGLPAERFMVITDAETASQLSDKLHGEAQLNASAQWLALDIEAGFPVIDAPNSNQFIPQATNIQALGGISFKKGCYAGQEMVARAKFRGANKRSLWYLAGHGSRVPQPGEDIEMQMGENWRRTGTVLAAVQLDDGRLLAQVVMNNDLETGTLFRVREESGAHTLHIEPLPYSLEEA</sequence>
<accession>A7MR73</accession>
<name>YGFZ_CROS8</name>
<organism>
    <name type="scientific">Cronobacter sakazakii (strain ATCC BAA-894)</name>
    <name type="common">Enterobacter sakazakii</name>
    <dbReference type="NCBI Taxonomy" id="290339"/>
    <lineage>
        <taxon>Bacteria</taxon>
        <taxon>Pseudomonadati</taxon>
        <taxon>Pseudomonadota</taxon>
        <taxon>Gammaproteobacteria</taxon>
        <taxon>Enterobacterales</taxon>
        <taxon>Enterobacteriaceae</taxon>
        <taxon>Cronobacter</taxon>
    </lineage>
</organism>
<protein>
    <recommendedName>
        <fullName evidence="1">tRNA-modifying protein YgfZ</fullName>
    </recommendedName>
</protein>
<comment type="function">
    <text evidence="1">Folate-binding protein involved in regulating the level of ATP-DnaA and in the modification of some tRNAs. It is probably a key factor in regulatory networks that act via tRNA modification, such as initiation of chromosomal replication.</text>
</comment>
<comment type="subcellular location">
    <subcellularLocation>
        <location evidence="1">Cytoplasm</location>
    </subcellularLocation>
</comment>
<comment type="similarity">
    <text evidence="1">Belongs to the tRNA-modifying YgfZ family.</text>
</comment>
<evidence type="ECO:0000255" key="1">
    <source>
        <dbReference type="HAMAP-Rule" id="MF_01175"/>
    </source>
</evidence>
<gene>
    <name type="ordered locus">ESA_00433</name>
</gene>
<keyword id="KW-0963">Cytoplasm</keyword>
<keyword id="KW-0290">Folate-binding</keyword>
<keyword id="KW-1185">Reference proteome</keyword>
<keyword id="KW-0819">tRNA processing</keyword>
<feature type="chain" id="PRO_1000065776" description="tRNA-modifying protein YgfZ">
    <location>
        <begin position="1"/>
        <end position="329"/>
    </location>
</feature>
<feature type="binding site" evidence="1">
    <location>
        <position position="27"/>
    </location>
    <ligand>
        <name>folate</name>
        <dbReference type="ChEBI" id="CHEBI:62501"/>
    </ligand>
</feature>
<feature type="binding site" evidence="1">
    <location>
        <position position="189"/>
    </location>
    <ligand>
        <name>folate</name>
        <dbReference type="ChEBI" id="CHEBI:62501"/>
    </ligand>
</feature>
<reference key="1">
    <citation type="journal article" date="2010" name="PLoS ONE">
        <title>Genome sequence of Cronobacter sakazakii BAA-894 and comparative genomic hybridization analysis with other Cronobacter species.</title>
        <authorList>
            <person name="Kucerova E."/>
            <person name="Clifton S.W."/>
            <person name="Xia X.Q."/>
            <person name="Long F."/>
            <person name="Porwollik S."/>
            <person name="Fulton L."/>
            <person name="Fronick C."/>
            <person name="Minx P."/>
            <person name="Kyung K."/>
            <person name="Warren W."/>
            <person name="Fulton R."/>
            <person name="Feng D."/>
            <person name="Wollam A."/>
            <person name="Shah N."/>
            <person name="Bhonagiri V."/>
            <person name="Nash W.E."/>
            <person name="Hallsworth-Pepin K."/>
            <person name="Wilson R.K."/>
            <person name="McClelland M."/>
            <person name="Forsythe S.J."/>
        </authorList>
    </citation>
    <scope>NUCLEOTIDE SEQUENCE [LARGE SCALE GENOMIC DNA]</scope>
    <source>
        <strain>ATCC BAA-894</strain>
    </source>
</reference>
<proteinExistence type="inferred from homology"/>
<dbReference type="EMBL" id="CP000783">
    <property type="protein sequence ID" value="ABU75730.1"/>
    <property type="molecule type" value="Genomic_DNA"/>
</dbReference>
<dbReference type="SMR" id="A7MR73"/>
<dbReference type="KEGG" id="esa:ESA_00433"/>
<dbReference type="PATRIC" id="fig|290339.8.peg.395"/>
<dbReference type="HOGENOM" id="CLU_007884_6_1_6"/>
<dbReference type="Proteomes" id="UP000000260">
    <property type="component" value="Chromosome"/>
</dbReference>
<dbReference type="GO" id="GO:0005737">
    <property type="term" value="C:cytoplasm"/>
    <property type="evidence" value="ECO:0007669"/>
    <property type="project" value="UniProtKB-SubCell"/>
</dbReference>
<dbReference type="GO" id="GO:0005542">
    <property type="term" value="F:folic acid binding"/>
    <property type="evidence" value="ECO:0007669"/>
    <property type="project" value="UniProtKB-UniRule"/>
</dbReference>
<dbReference type="GO" id="GO:0016226">
    <property type="term" value="P:iron-sulfur cluster assembly"/>
    <property type="evidence" value="ECO:0007669"/>
    <property type="project" value="TreeGrafter"/>
</dbReference>
<dbReference type="GO" id="GO:0009451">
    <property type="term" value="P:RNA modification"/>
    <property type="evidence" value="ECO:0007669"/>
    <property type="project" value="InterPro"/>
</dbReference>
<dbReference type="GO" id="GO:0008033">
    <property type="term" value="P:tRNA processing"/>
    <property type="evidence" value="ECO:0007669"/>
    <property type="project" value="UniProtKB-UniRule"/>
</dbReference>
<dbReference type="FunFam" id="2.40.30.160:FF:000001">
    <property type="entry name" value="tRNA-modifying protein YgfZ"/>
    <property type="match status" value="1"/>
</dbReference>
<dbReference type="FunFam" id="3.30.70.1400:FF:000002">
    <property type="entry name" value="tRNA-modifying protein YgfZ"/>
    <property type="match status" value="1"/>
</dbReference>
<dbReference type="FunFam" id="3.30.70.1630:FF:000001">
    <property type="entry name" value="tRNA-modifying protein YgfZ"/>
    <property type="match status" value="1"/>
</dbReference>
<dbReference type="Gene3D" id="2.40.30.160">
    <property type="match status" value="1"/>
</dbReference>
<dbReference type="Gene3D" id="3.30.70.1630">
    <property type="match status" value="1"/>
</dbReference>
<dbReference type="Gene3D" id="3.30.70.1400">
    <property type="entry name" value="Aminomethyltransferase beta-barrel domains"/>
    <property type="match status" value="1"/>
</dbReference>
<dbReference type="HAMAP" id="MF_01175">
    <property type="entry name" value="tRNA_modifying_YgfZ"/>
    <property type="match status" value="1"/>
</dbReference>
<dbReference type="InterPro" id="IPR006222">
    <property type="entry name" value="GCV_T_N"/>
</dbReference>
<dbReference type="InterPro" id="IPR029043">
    <property type="entry name" value="GcvT/YgfZ_C"/>
</dbReference>
<dbReference type="InterPro" id="IPR023758">
    <property type="entry name" value="tRNA-modifying_YgfZ"/>
</dbReference>
<dbReference type="InterPro" id="IPR045179">
    <property type="entry name" value="YgfZ/GcvT"/>
</dbReference>
<dbReference type="InterPro" id="IPR017703">
    <property type="entry name" value="YgfZ/GcvT_CS"/>
</dbReference>
<dbReference type="InterPro" id="IPR048451">
    <property type="entry name" value="YgfZ_barrel"/>
</dbReference>
<dbReference type="NCBIfam" id="NF007110">
    <property type="entry name" value="PRK09559.1"/>
    <property type="match status" value="1"/>
</dbReference>
<dbReference type="NCBIfam" id="TIGR03317">
    <property type="entry name" value="ygfZ_signature"/>
    <property type="match status" value="1"/>
</dbReference>
<dbReference type="PANTHER" id="PTHR22602">
    <property type="entry name" value="TRANSFERASE CAF17, MITOCHONDRIAL-RELATED"/>
    <property type="match status" value="1"/>
</dbReference>
<dbReference type="PANTHER" id="PTHR22602:SF0">
    <property type="entry name" value="TRANSFERASE CAF17, MITOCHONDRIAL-RELATED"/>
    <property type="match status" value="1"/>
</dbReference>
<dbReference type="Pfam" id="PF01571">
    <property type="entry name" value="GCV_T"/>
    <property type="match status" value="1"/>
</dbReference>
<dbReference type="Pfam" id="PF21130">
    <property type="entry name" value="YgfZ_barrel"/>
    <property type="match status" value="1"/>
</dbReference>
<dbReference type="SUPFAM" id="SSF101790">
    <property type="entry name" value="Aminomethyltransferase beta-barrel domain"/>
    <property type="match status" value="1"/>
</dbReference>
<dbReference type="SUPFAM" id="SSF103025">
    <property type="entry name" value="Folate-binding domain"/>
    <property type="match status" value="1"/>
</dbReference>